<sequence>MFHVKHFDVLVIGGGHAGTEAAHAAARMGSQTGLITMSRSGIGVMSCNPAIGGLGKGHLVREIDALDGVMGRVADQAGIQFRLLNRRKGPAVQGPRAQSDRAIYHNRMLEATDQQQNLDIIVGEAVDFVMDGERVIGVVLQDDAEILAKTVILTTGTFLRGVIHIGDVSRSGGRMGDKASVRLADRIDSFGLPMGRLKTGTPPRLSSKSINWDVLEEQPGDDEPTLFSFLSKGVSARQVSCGITHTNVRTHDIIRDNITRSAMYGGHIDGVGPRYCPSIEDKIIRFADKESHQIFLEPEGLNTDAVYPNGISTSLPQDVQSEYVHSIVGLEKAIILQPGYAIEYDYVDPRALDSSLSVLSVPGLYLAGQINGTTGYEEAAAQGLVAGLNASLEARGSDPITFSRSDSYIGVMIDDLTTRGVMEPYRMFTSRAEFRLSLRADNADQRLTPIGLALGCVSDERKQAFEVKIEALDRARRLLTESSYTPKQAGEAGISVSHDGSRRTAMQLLAFPNTSFKDLSLLDPVFDGIDVETQQQMEREALYATYIERQQKDVDLLKKDEGHKIPADFDYDQLSGLSNELKSKLNSTRPTSLAQVGRIDGMTPAALTLILAKLRQSSKKRSA</sequence>
<evidence type="ECO:0000255" key="1">
    <source>
        <dbReference type="HAMAP-Rule" id="MF_00129"/>
    </source>
</evidence>
<dbReference type="EMBL" id="CP000362">
    <property type="protein sequence ID" value="ABG30147.1"/>
    <property type="molecule type" value="Genomic_DNA"/>
</dbReference>
<dbReference type="SMR" id="Q16CZ6"/>
<dbReference type="STRING" id="375451.RD1_0432"/>
<dbReference type="KEGG" id="rde:RD1_0432"/>
<dbReference type="eggNOG" id="COG0445">
    <property type="taxonomic scope" value="Bacteria"/>
</dbReference>
<dbReference type="HOGENOM" id="CLU_007831_2_2_5"/>
<dbReference type="Proteomes" id="UP000007029">
    <property type="component" value="Chromosome"/>
</dbReference>
<dbReference type="GO" id="GO:0005829">
    <property type="term" value="C:cytosol"/>
    <property type="evidence" value="ECO:0007669"/>
    <property type="project" value="TreeGrafter"/>
</dbReference>
<dbReference type="GO" id="GO:0050660">
    <property type="term" value="F:flavin adenine dinucleotide binding"/>
    <property type="evidence" value="ECO:0007669"/>
    <property type="project" value="UniProtKB-UniRule"/>
</dbReference>
<dbReference type="GO" id="GO:0030488">
    <property type="term" value="P:tRNA methylation"/>
    <property type="evidence" value="ECO:0007669"/>
    <property type="project" value="TreeGrafter"/>
</dbReference>
<dbReference type="GO" id="GO:0002098">
    <property type="term" value="P:tRNA wobble uridine modification"/>
    <property type="evidence" value="ECO:0007669"/>
    <property type="project" value="InterPro"/>
</dbReference>
<dbReference type="FunFam" id="3.50.50.60:FF:000082">
    <property type="entry name" value="protein MTO1 homolog, mitochondrial isoform X1"/>
    <property type="match status" value="1"/>
</dbReference>
<dbReference type="FunFam" id="1.10.150.570:FF:000001">
    <property type="entry name" value="tRNA uridine 5-carboxymethylaminomethyl modification enzyme MnmG"/>
    <property type="match status" value="1"/>
</dbReference>
<dbReference type="FunFam" id="3.50.50.60:FF:000002">
    <property type="entry name" value="tRNA uridine 5-carboxymethylaminomethyl modification enzyme MnmG"/>
    <property type="match status" value="1"/>
</dbReference>
<dbReference type="Gene3D" id="3.50.50.60">
    <property type="entry name" value="FAD/NAD(P)-binding domain"/>
    <property type="match status" value="2"/>
</dbReference>
<dbReference type="Gene3D" id="1.10.150.570">
    <property type="entry name" value="GidA associated domain, C-terminal subdomain"/>
    <property type="match status" value="1"/>
</dbReference>
<dbReference type="Gene3D" id="1.10.10.1800">
    <property type="entry name" value="tRNA uridine 5-carboxymethylaminomethyl modification enzyme MnmG/GidA"/>
    <property type="match status" value="1"/>
</dbReference>
<dbReference type="HAMAP" id="MF_00129">
    <property type="entry name" value="MnmG_GidA"/>
    <property type="match status" value="1"/>
</dbReference>
<dbReference type="InterPro" id="IPR036188">
    <property type="entry name" value="FAD/NAD-bd_sf"/>
</dbReference>
<dbReference type="InterPro" id="IPR049312">
    <property type="entry name" value="GIDA_C_N"/>
</dbReference>
<dbReference type="InterPro" id="IPR004416">
    <property type="entry name" value="MnmG"/>
</dbReference>
<dbReference type="InterPro" id="IPR002218">
    <property type="entry name" value="MnmG-rel"/>
</dbReference>
<dbReference type="InterPro" id="IPR020595">
    <property type="entry name" value="MnmG-rel_CS"/>
</dbReference>
<dbReference type="InterPro" id="IPR026904">
    <property type="entry name" value="MnmG_C"/>
</dbReference>
<dbReference type="InterPro" id="IPR047001">
    <property type="entry name" value="MnmG_C_subdom"/>
</dbReference>
<dbReference type="InterPro" id="IPR044920">
    <property type="entry name" value="MnmG_C_subdom_sf"/>
</dbReference>
<dbReference type="InterPro" id="IPR040131">
    <property type="entry name" value="MnmG_N"/>
</dbReference>
<dbReference type="NCBIfam" id="TIGR00136">
    <property type="entry name" value="mnmG_gidA"/>
    <property type="match status" value="1"/>
</dbReference>
<dbReference type="PANTHER" id="PTHR11806">
    <property type="entry name" value="GLUCOSE INHIBITED DIVISION PROTEIN A"/>
    <property type="match status" value="1"/>
</dbReference>
<dbReference type="PANTHER" id="PTHR11806:SF0">
    <property type="entry name" value="PROTEIN MTO1 HOMOLOG, MITOCHONDRIAL"/>
    <property type="match status" value="1"/>
</dbReference>
<dbReference type="Pfam" id="PF01134">
    <property type="entry name" value="GIDA"/>
    <property type="match status" value="1"/>
</dbReference>
<dbReference type="Pfam" id="PF21680">
    <property type="entry name" value="GIDA_C_1st"/>
    <property type="match status" value="1"/>
</dbReference>
<dbReference type="Pfam" id="PF13932">
    <property type="entry name" value="SAM_GIDA_C"/>
    <property type="match status" value="1"/>
</dbReference>
<dbReference type="PRINTS" id="PR00368">
    <property type="entry name" value="FADPNR"/>
</dbReference>
<dbReference type="PRINTS" id="PR00411">
    <property type="entry name" value="PNDRDTASEI"/>
</dbReference>
<dbReference type="SMART" id="SM01228">
    <property type="entry name" value="GIDA_assoc_3"/>
    <property type="match status" value="1"/>
</dbReference>
<dbReference type="SUPFAM" id="SSF51905">
    <property type="entry name" value="FAD/NAD(P)-binding domain"/>
    <property type="match status" value="1"/>
</dbReference>
<dbReference type="PROSITE" id="PS01280">
    <property type="entry name" value="GIDA_1"/>
    <property type="match status" value="1"/>
</dbReference>
<dbReference type="PROSITE" id="PS01281">
    <property type="entry name" value="GIDA_2"/>
    <property type="match status" value="1"/>
</dbReference>
<gene>
    <name evidence="1" type="primary">mnmG</name>
    <name evidence="1" type="synonym">gidA</name>
    <name type="ordered locus">RD1_0432</name>
</gene>
<accession>Q16CZ6</accession>
<organism>
    <name type="scientific">Roseobacter denitrificans (strain ATCC 33942 / OCh 114)</name>
    <name type="common">Erythrobacter sp. (strain OCh 114)</name>
    <name type="synonym">Roseobacter denitrificans</name>
    <dbReference type="NCBI Taxonomy" id="375451"/>
    <lineage>
        <taxon>Bacteria</taxon>
        <taxon>Pseudomonadati</taxon>
        <taxon>Pseudomonadota</taxon>
        <taxon>Alphaproteobacteria</taxon>
        <taxon>Rhodobacterales</taxon>
        <taxon>Roseobacteraceae</taxon>
        <taxon>Roseobacter</taxon>
    </lineage>
</organism>
<comment type="function">
    <text evidence="1">NAD-binding protein involved in the addition of a carboxymethylaminomethyl (cmnm) group at the wobble position (U34) of certain tRNAs, forming tRNA-cmnm(5)s(2)U34.</text>
</comment>
<comment type="cofactor">
    <cofactor evidence="1">
        <name>FAD</name>
        <dbReference type="ChEBI" id="CHEBI:57692"/>
    </cofactor>
</comment>
<comment type="subunit">
    <text evidence="1">Homodimer. Heterotetramer of two MnmE and two MnmG subunits.</text>
</comment>
<comment type="subcellular location">
    <subcellularLocation>
        <location evidence="1">Cytoplasm</location>
    </subcellularLocation>
</comment>
<comment type="similarity">
    <text evidence="1">Belongs to the MnmG family.</text>
</comment>
<keyword id="KW-0963">Cytoplasm</keyword>
<keyword id="KW-0274">FAD</keyword>
<keyword id="KW-0285">Flavoprotein</keyword>
<keyword id="KW-0520">NAD</keyword>
<keyword id="KW-1185">Reference proteome</keyword>
<keyword id="KW-0819">tRNA processing</keyword>
<proteinExistence type="inferred from homology"/>
<feature type="chain" id="PRO_0000345328" description="tRNA uridine 5-carboxymethylaminomethyl modification enzyme MnmG">
    <location>
        <begin position="1"/>
        <end position="623"/>
    </location>
</feature>
<feature type="binding site" evidence="1">
    <location>
        <begin position="13"/>
        <end position="18"/>
    </location>
    <ligand>
        <name>FAD</name>
        <dbReference type="ChEBI" id="CHEBI:57692"/>
    </ligand>
</feature>
<feature type="binding site" evidence="1">
    <location>
        <begin position="272"/>
        <end position="286"/>
    </location>
    <ligand>
        <name>NAD(+)</name>
        <dbReference type="ChEBI" id="CHEBI:57540"/>
    </ligand>
</feature>
<name>MNMG_ROSDO</name>
<protein>
    <recommendedName>
        <fullName evidence="1">tRNA uridine 5-carboxymethylaminomethyl modification enzyme MnmG</fullName>
    </recommendedName>
    <alternativeName>
        <fullName evidence="1">Glucose-inhibited division protein A</fullName>
    </alternativeName>
</protein>
<reference key="1">
    <citation type="journal article" date="2007" name="J. Bacteriol.">
        <title>The complete genome sequence of Roseobacter denitrificans reveals a mixotrophic rather than photosynthetic metabolism.</title>
        <authorList>
            <person name="Swingley W.D."/>
            <person name="Sadekar S."/>
            <person name="Mastrian S.D."/>
            <person name="Matthies H.J."/>
            <person name="Hao J."/>
            <person name="Ramos H."/>
            <person name="Acharya C.R."/>
            <person name="Conrad A.L."/>
            <person name="Taylor H.L."/>
            <person name="Dejesa L.C."/>
            <person name="Shah M.K."/>
            <person name="O'Huallachain M.E."/>
            <person name="Lince M.T."/>
            <person name="Blankenship R.E."/>
            <person name="Beatty J.T."/>
            <person name="Touchman J.W."/>
        </authorList>
    </citation>
    <scope>NUCLEOTIDE SEQUENCE [LARGE SCALE GENOMIC DNA]</scope>
    <source>
        <strain>ATCC 33942 / OCh 114</strain>
    </source>
</reference>